<sequence>MSILVKNNIHWVGQRDWEVRDFHGTEYKTLRGSSYNSYLIREEKNVLIDTVDHKFSREFVQNLRSEIDLADIDYIIINHAEEDHAGALTELMAQIPDTPIYCTANAIDSITGHHHHPEWNFNVVKTGDTLDIGNGKQLIFVETPMLHWPDSMMTYMTGDAVLFSNDAFGQHYCDERLFNDEVDQTELFEQCQRYYANILTPFSRLVTPKITEILGFNLPVDMIATSHGVVWRDNPTQIVELYLKWAADYQEDRITIFYDTMSNNTRMMADAIAQGINEVDPNVAVKIFNVARSDKNEILTNVFRSKGVLVGTSTMNNVMMPKIAGLVEEMTGLRFRNKRASAFGSHGWSGGAVDRLSTRLQDAGFEMSLSLKAKWRPDIDALELCRQHGRDIARQWALAPLPETNVKATTQEEECACAAAAAADLGPSMQCSVCQWIYDPAKGEPLQDVAPGTPWSDVPDNFLCPECSLGKDVFDVLATEAK</sequence>
<proteinExistence type="inferred from homology"/>
<organism>
    <name type="scientific">Citrobacter koseri (strain ATCC BAA-895 / CDC 4225-83 / SGSC4696)</name>
    <dbReference type="NCBI Taxonomy" id="290338"/>
    <lineage>
        <taxon>Bacteria</taxon>
        <taxon>Pseudomonadati</taxon>
        <taxon>Pseudomonadota</taxon>
        <taxon>Gammaproteobacteria</taxon>
        <taxon>Enterobacterales</taxon>
        <taxon>Enterobacteriaceae</taxon>
        <taxon>Citrobacter</taxon>
    </lineage>
</organism>
<comment type="function">
    <text evidence="1">Anaerobic nitric oxide reductase; uses NADH to detoxify nitric oxide (NO), protecting several 4Fe-4S NO-sensitive enzymes. Has at least 2 reductase partners, only one of which (NorW, flavorubredoxin reductase) has been identified. NO probably binds to the di-iron center; electrons enter from the NorW at rubredoxin and are transferred sequentially to the FMN center and the di-iron center. Also able to function as an aerobic oxygen reductase.</text>
</comment>
<comment type="cofactor">
    <cofactor evidence="1">
        <name>Fe cation</name>
        <dbReference type="ChEBI" id="CHEBI:24875"/>
    </cofactor>
    <text evidence="1">Binds 3 Fe cations per monomer.</text>
</comment>
<comment type="cofactor">
    <cofactor evidence="1">
        <name>FMN</name>
        <dbReference type="ChEBI" id="CHEBI:58210"/>
    </cofactor>
    <text evidence="1">Binds 1 FMN per monomer.</text>
</comment>
<comment type="pathway">
    <text evidence="1">Nitrogen metabolism; nitric oxide reduction.</text>
</comment>
<comment type="subunit">
    <text evidence="1">Homotetramer.</text>
</comment>
<comment type="subcellular location">
    <subcellularLocation>
        <location evidence="1">Cytoplasm</location>
    </subcellularLocation>
</comment>
<comment type="similarity">
    <text evidence="1">In the N-terminal section; belongs to the zinc metallo-hydrolase group 3 family.</text>
</comment>
<reference key="1">
    <citation type="submission" date="2007-08" db="EMBL/GenBank/DDBJ databases">
        <authorList>
            <consortium name="The Citrobacter koseri Genome Sequencing Project"/>
            <person name="McClelland M."/>
            <person name="Sanderson E.K."/>
            <person name="Porwollik S."/>
            <person name="Spieth J."/>
            <person name="Clifton W.S."/>
            <person name="Latreille P."/>
            <person name="Courtney L."/>
            <person name="Wang C."/>
            <person name="Pepin K."/>
            <person name="Bhonagiri V."/>
            <person name="Nash W."/>
            <person name="Johnson M."/>
            <person name="Thiruvilangam P."/>
            <person name="Wilson R."/>
        </authorList>
    </citation>
    <scope>NUCLEOTIDE SEQUENCE [LARGE SCALE GENOMIC DNA]</scope>
    <source>
        <strain>ATCC BAA-895 / CDC 4225-83 / SGSC4696</strain>
    </source>
</reference>
<name>NORV_CITK8</name>
<evidence type="ECO:0000255" key="1">
    <source>
        <dbReference type="HAMAP-Rule" id="MF_01312"/>
    </source>
</evidence>
<gene>
    <name evidence="1" type="primary">norV</name>
    <name evidence="1" type="synonym">flrD</name>
    <name type="ordered locus">CKO_04064</name>
</gene>
<accession>A8ANR7</accession>
<protein>
    <recommendedName>
        <fullName evidence="1">Anaerobic nitric oxide reductase flavorubredoxin</fullName>
        <shortName evidence="1">FlRd</shortName>
        <shortName evidence="1">FlavoRb</shortName>
    </recommendedName>
</protein>
<feature type="chain" id="PRO_0000341306" description="Anaerobic nitric oxide reductase flavorubredoxin">
    <location>
        <begin position="1"/>
        <end position="482"/>
    </location>
</feature>
<feature type="domain" description="Flavodoxin-like" evidence="1">
    <location>
        <begin position="254"/>
        <end position="393"/>
    </location>
</feature>
<feature type="domain" description="Rubredoxin-like" evidence="1">
    <location>
        <begin position="426"/>
        <end position="477"/>
    </location>
</feature>
<feature type="region of interest" description="Zinc metallo-hydrolase">
    <location>
        <begin position="30"/>
        <end position="210"/>
    </location>
</feature>
<feature type="binding site" evidence="1">
    <location>
        <position position="79"/>
    </location>
    <ligand>
        <name>Fe cation</name>
        <dbReference type="ChEBI" id="CHEBI:24875"/>
        <label>1</label>
    </ligand>
</feature>
<feature type="binding site" evidence="1">
    <location>
        <position position="81"/>
    </location>
    <ligand>
        <name>Fe cation</name>
        <dbReference type="ChEBI" id="CHEBI:24875"/>
        <label>1</label>
    </ligand>
</feature>
<feature type="binding site" evidence="1">
    <location>
        <position position="83"/>
    </location>
    <ligand>
        <name>Fe cation</name>
        <dbReference type="ChEBI" id="CHEBI:24875"/>
        <label>2</label>
    </ligand>
</feature>
<feature type="binding site" evidence="1">
    <location>
        <position position="147"/>
    </location>
    <ligand>
        <name>Fe cation</name>
        <dbReference type="ChEBI" id="CHEBI:24875"/>
        <label>1</label>
    </ligand>
</feature>
<feature type="binding site" evidence="1">
    <location>
        <position position="166"/>
    </location>
    <ligand>
        <name>Fe cation</name>
        <dbReference type="ChEBI" id="CHEBI:24875"/>
        <label>1</label>
    </ligand>
</feature>
<feature type="binding site" evidence="1">
    <location>
        <position position="166"/>
    </location>
    <ligand>
        <name>Fe cation</name>
        <dbReference type="ChEBI" id="CHEBI:24875"/>
        <label>2</label>
    </ligand>
</feature>
<feature type="binding site" evidence="1">
    <location>
        <position position="227"/>
    </location>
    <ligand>
        <name>Fe cation</name>
        <dbReference type="ChEBI" id="CHEBI:24875"/>
        <label>2</label>
    </ligand>
</feature>
<feature type="binding site" evidence="1">
    <location>
        <begin position="260"/>
        <end position="264"/>
    </location>
    <ligand>
        <name>FMN</name>
        <dbReference type="ChEBI" id="CHEBI:58210"/>
    </ligand>
</feature>
<feature type="binding site" evidence="1">
    <location>
        <begin position="342"/>
        <end position="369"/>
    </location>
    <ligand>
        <name>FMN</name>
        <dbReference type="ChEBI" id="CHEBI:58210"/>
    </ligand>
</feature>
<feature type="binding site" evidence="1">
    <location>
        <position position="431"/>
    </location>
    <ligand>
        <name>Fe cation</name>
        <dbReference type="ChEBI" id="CHEBI:24875"/>
        <label>3</label>
    </ligand>
</feature>
<feature type="binding site" evidence="1">
    <location>
        <position position="434"/>
    </location>
    <ligand>
        <name>Fe cation</name>
        <dbReference type="ChEBI" id="CHEBI:24875"/>
        <label>3</label>
    </ligand>
</feature>
<feature type="binding site" evidence="1">
    <location>
        <position position="464"/>
    </location>
    <ligand>
        <name>Fe cation</name>
        <dbReference type="ChEBI" id="CHEBI:24875"/>
        <label>3</label>
    </ligand>
</feature>
<feature type="binding site" evidence="1">
    <location>
        <position position="467"/>
    </location>
    <ligand>
        <name>Fe cation</name>
        <dbReference type="ChEBI" id="CHEBI:24875"/>
        <label>3</label>
    </ligand>
</feature>
<dbReference type="EMBL" id="CP000822">
    <property type="protein sequence ID" value="ABV15130.1"/>
    <property type="molecule type" value="Genomic_DNA"/>
</dbReference>
<dbReference type="RefSeq" id="WP_012134820.1">
    <property type="nucleotide sequence ID" value="NC_009792.1"/>
</dbReference>
<dbReference type="SMR" id="A8ANR7"/>
<dbReference type="STRING" id="290338.CKO_04064"/>
<dbReference type="GeneID" id="45137706"/>
<dbReference type="KEGG" id="cko:CKO_04064"/>
<dbReference type="HOGENOM" id="CLU_017490_0_1_6"/>
<dbReference type="OrthoDB" id="9800607at2"/>
<dbReference type="UniPathway" id="UPA00638"/>
<dbReference type="Proteomes" id="UP000008148">
    <property type="component" value="Chromosome"/>
</dbReference>
<dbReference type="GO" id="GO:0005737">
    <property type="term" value="C:cytoplasm"/>
    <property type="evidence" value="ECO:0007669"/>
    <property type="project" value="UniProtKB-SubCell"/>
</dbReference>
<dbReference type="GO" id="GO:0009055">
    <property type="term" value="F:electron transfer activity"/>
    <property type="evidence" value="ECO:0007669"/>
    <property type="project" value="UniProtKB-UniRule"/>
</dbReference>
<dbReference type="GO" id="GO:0010181">
    <property type="term" value="F:FMN binding"/>
    <property type="evidence" value="ECO:0007669"/>
    <property type="project" value="InterPro"/>
</dbReference>
<dbReference type="GO" id="GO:0005506">
    <property type="term" value="F:iron ion binding"/>
    <property type="evidence" value="ECO:0007669"/>
    <property type="project" value="InterPro"/>
</dbReference>
<dbReference type="GO" id="GO:0016966">
    <property type="term" value="F:nitric oxide reductase activity"/>
    <property type="evidence" value="ECO:0007669"/>
    <property type="project" value="InterPro"/>
</dbReference>
<dbReference type="CDD" id="cd07709">
    <property type="entry name" value="flavodiiron_proteins_MBL-fold"/>
    <property type="match status" value="1"/>
</dbReference>
<dbReference type="CDD" id="cd00730">
    <property type="entry name" value="rubredoxin"/>
    <property type="match status" value="1"/>
</dbReference>
<dbReference type="FunFam" id="3.40.50.360:FF:000012">
    <property type="entry name" value="Anaerobic nitric oxide reductase flavorubredoxin"/>
    <property type="match status" value="1"/>
</dbReference>
<dbReference type="FunFam" id="3.60.15.10:FF:000009">
    <property type="entry name" value="Anaerobic nitric oxide reductase flavorubredoxin"/>
    <property type="match status" value="1"/>
</dbReference>
<dbReference type="Gene3D" id="2.20.28.10">
    <property type="match status" value="1"/>
</dbReference>
<dbReference type="Gene3D" id="3.40.50.360">
    <property type="match status" value="1"/>
</dbReference>
<dbReference type="Gene3D" id="3.60.15.10">
    <property type="entry name" value="Ribonuclease Z/Hydroxyacylglutathione hydrolase-like"/>
    <property type="match status" value="1"/>
</dbReference>
<dbReference type="HAMAP" id="MF_01312">
    <property type="entry name" value="NorV"/>
    <property type="match status" value="1"/>
</dbReference>
<dbReference type="InterPro" id="IPR023957">
    <property type="entry name" value="Anaer_NO_rdtase_flvorubredoxin"/>
</dbReference>
<dbReference type="InterPro" id="IPR008254">
    <property type="entry name" value="Flavodoxin/NO_synth"/>
</dbReference>
<dbReference type="InterPro" id="IPR029039">
    <property type="entry name" value="Flavoprotein-like_sf"/>
</dbReference>
<dbReference type="InterPro" id="IPR001279">
    <property type="entry name" value="Metallo-B-lactamas"/>
</dbReference>
<dbReference type="InterPro" id="IPR045761">
    <property type="entry name" value="ODP_dom"/>
</dbReference>
<dbReference type="InterPro" id="IPR036866">
    <property type="entry name" value="RibonucZ/Hydroxyglut_hydro"/>
</dbReference>
<dbReference type="InterPro" id="IPR024934">
    <property type="entry name" value="Rubredoxin-like_dom"/>
</dbReference>
<dbReference type="InterPro" id="IPR016440">
    <property type="entry name" value="Rubredoxin-O_OxRdtase"/>
</dbReference>
<dbReference type="InterPro" id="IPR024935">
    <property type="entry name" value="Rubredoxin_dom"/>
</dbReference>
<dbReference type="NCBIfam" id="NF003954">
    <property type="entry name" value="PRK05452.1"/>
    <property type="match status" value="1"/>
</dbReference>
<dbReference type="PANTHER" id="PTHR43717">
    <property type="entry name" value="ANAEROBIC NITRIC OXIDE REDUCTASE FLAVORUBREDOXIN"/>
    <property type="match status" value="1"/>
</dbReference>
<dbReference type="PANTHER" id="PTHR43717:SF1">
    <property type="entry name" value="ANAEROBIC NITRIC OXIDE REDUCTASE FLAVORUBREDOXIN"/>
    <property type="match status" value="1"/>
</dbReference>
<dbReference type="Pfam" id="PF00258">
    <property type="entry name" value="Flavodoxin_1"/>
    <property type="match status" value="1"/>
</dbReference>
<dbReference type="Pfam" id="PF19583">
    <property type="entry name" value="ODP"/>
    <property type="match status" value="1"/>
</dbReference>
<dbReference type="Pfam" id="PF00301">
    <property type="entry name" value="Rubredoxin"/>
    <property type="match status" value="1"/>
</dbReference>
<dbReference type="PIRSF" id="PIRSF005243">
    <property type="entry name" value="ROO"/>
    <property type="match status" value="1"/>
</dbReference>
<dbReference type="PRINTS" id="PR00163">
    <property type="entry name" value="RUBREDOXIN"/>
</dbReference>
<dbReference type="SMART" id="SM00849">
    <property type="entry name" value="Lactamase_B"/>
    <property type="match status" value="1"/>
</dbReference>
<dbReference type="SUPFAM" id="SSF52218">
    <property type="entry name" value="Flavoproteins"/>
    <property type="match status" value="1"/>
</dbReference>
<dbReference type="SUPFAM" id="SSF56281">
    <property type="entry name" value="Metallo-hydrolase/oxidoreductase"/>
    <property type="match status" value="1"/>
</dbReference>
<dbReference type="SUPFAM" id="SSF57802">
    <property type="entry name" value="Rubredoxin-like"/>
    <property type="match status" value="1"/>
</dbReference>
<dbReference type="PROSITE" id="PS50902">
    <property type="entry name" value="FLAVODOXIN_LIKE"/>
    <property type="match status" value="1"/>
</dbReference>
<dbReference type="PROSITE" id="PS50903">
    <property type="entry name" value="RUBREDOXIN_LIKE"/>
    <property type="match status" value="1"/>
</dbReference>
<keyword id="KW-0963">Cytoplasm</keyword>
<keyword id="KW-0249">Electron transport</keyword>
<keyword id="KW-0285">Flavoprotein</keyword>
<keyword id="KW-0288">FMN</keyword>
<keyword id="KW-0408">Iron</keyword>
<keyword id="KW-0479">Metal-binding</keyword>
<keyword id="KW-0560">Oxidoreductase</keyword>
<keyword id="KW-1185">Reference proteome</keyword>
<keyword id="KW-0813">Transport</keyword>